<proteinExistence type="inferred from homology"/>
<protein>
    <recommendedName>
        <fullName evidence="1">Photosystem II reaction center protein Psb30</fullName>
    </recommendedName>
    <alternativeName>
        <fullName evidence="1">Photosystem II reaction center protein Ycf12</fullName>
    </alternativeName>
</protein>
<keyword id="KW-0150">Chloroplast</keyword>
<keyword id="KW-0472">Membrane</keyword>
<keyword id="KW-0602">Photosynthesis</keyword>
<keyword id="KW-0604">Photosystem II</keyword>
<keyword id="KW-0934">Plastid</keyword>
<keyword id="KW-0793">Thylakoid</keyword>
<keyword id="KW-0812">Transmembrane</keyword>
<keyword id="KW-1133">Transmembrane helix</keyword>
<feature type="chain" id="PRO_0000059028" description="Photosystem II reaction center protein Psb30">
    <location>
        <begin position="1"/>
        <end position="34"/>
    </location>
</feature>
<feature type="transmembrane region" description="Helical" evidence="1">
    <location>
        <begin position="7"/>
        <end position="27"/>
    </location>
</feature>
<sequence>MPNLQTVAQLLALFVIITSGPAIIILIALRRGNL</sequence>
<gene>
    <name evidence="1" type="primary">psb30</name>
    <name evidence="1" type="synonym">ycf12</name>
</gene>
<comment type="function">
    <text evidence="1">A core subunit of photosystem II (PSII), probably helps stabilize the reaction center.</text>
</comment>
<comment type="subunit">
    <text evidence="1">PSII is composed of 1 copy each of membrane proteins PsbA, PsbB, PsbC, PsbD, PsbE, PsbF, PsbH, PsbI, PsbJ, PsbK, PsbL, PsbM, PsbT, PsbX, PsbY, PsbZ, Psb30/Ycf12, peripheral proteins of the oxygen-evolving complex and a large number of cofactors. It forms dimeric complexes.</text>
</comment>
<comment type="subcellular location">
    <subcellularLocation>
        <location evidence="1">Plastid</location>
        <location evidence="1">Chloroplast thylakoid membrane</location>
        <topology evidence="1">Single-pass membrane protein</topology>
    </subcellularLocation>
</comment>
<comment type="similarity">
    <text evidence="1">Belongs to the Psb30/Ycf12 family.</text>
</comment>
<organism>
    <name type="scientific">Guillardia theta</name>
    <name type="common">Cryptophyte</name>
    <name type="synonym">Cryptomonas phi</name>
    <dbReference type="NCBI Taxonomy" id="55529"/>
    <lineage>
        <taxon>Eukaryota</taxon>
        <taxon>Cryptophyceae</taxon>
        <taxon>Pyrenomonadales</taxon>
        <taxon>Geminigeraceae</taxon>
        <taxon>Guillardia</taxon>
    </lineage>
</organism>
<name>PSB30_GUITH</name>
<reference key="1">
    <citation type="journal article" date="1999" name="J. Mol. Evol.">
        <title>The plastid genome of the cryptophyte alga, Guillardia theta: complete sequence and conserved synteny groups confirm its common ancestry with red algae.</title>
        <authorList>
            <person name="Douglas S.E."/>
            <person name="Penny S.L."/>
        </authorList>
    </citation>
    <scope>NUCLEOTIDE SEQUENCE [LARGE SCALE GENOMIC DNA]</scope>
</reference>
<evidence type="ECO:0000255" key="1">
    <source>
        <dbReference type="HAMAP-Rule" id="MF_01329"/>
    </source>
</evidence>
<dbReference type="EMBL" id="AF041468">
    <property type="protein sequence ID" value="AAC35651.1"/>
    <property type="molecule type" value="Genomic_DNA"/>
</dbReference>
<dbReference type="RefSeq" id="NP_050717.1">
    <property type="nucleotide sequence ID" value="NC_000926.1"/>
</dbReference>
<dbReference type="SMR" id="O78460"/>
<dbReference type="GeneID" id="857020"/>
<dbReference type="HOGENOM" id="CLU_3378119_0_0_1"/>
<dbReference type="GO" id="GO:0009535">
    <property type="term" value="C:chloroplast thylakoid membrane"/>
    <property type="evidence" value="ECO:0007669"/>
    <property type="project" value="UniProtKB-SubCell"/>
</dbReference>
<dbReference type="GO" id="GO:0009523">
    <property type="term" value="C:photosystem II"/>
    <property type="evidence" value="ECO:0007669"/>
    <property type="project" value="UniProtKB-KW"/>
</dbReference>
<dbReference type="GO" id="GO:0015979">
    <property type="term" value="P:photosynthesis"/>
    <property type="evidence" value="ECO:0007669"/>
    <property type="project" value="UniProtKB-KW"/>
</dbReference>
<dbReference type="HAMAP" id="MF_01329">
    <property type="entry name" value="PSII_Psb30_Ycf12"/>
    <property type="match status" value="1"/>
</dbReference>
<dbReference type="InterPro" id="IPR010284">
    <property type="entry name" value="PSII_Ycf12_core-subunit"/>
</dbReference>
<dbReference type="NCBIfam" id="NF010239">
    <property type="entry name" value="PRK13686.1"/>
    <property type="match status" value="1"/>
</dbReference>
<dbReference type="Pfam" id="PF05969">
    <property type="entry name" value="PSII_Ycf12"/>
    <property type="match status" value="1"/>
</dbReference>
<geneLocation type="chloroplast"/>
<accession>O78460</accession>